<organism>
    <name type="scientific">Candida glabrata (strain ATCC 2001 / BCRC 20586 / JCM 3761 / NBRC 0622 / NRRL Y-65 / CBS 138)</name>
    <name type="common">Yeast</name>
    <name type="synonym">Nakaseomyces glabratus</name>
    <dbReference type="NCBI Taxonomy" id="284593"/>
    <lineage>
        <taxon>Eukaryota</taxon>
        <taxon>Fungi</taxon>
        <taxon>Dikarya</taxon>
        <taxon>Ascomycota</taxon>
        <taxon>Saccharomycotina</taxon>
        <taxon>Saccharomycetes</taxon>
        <taxon>Saccharomycetales</taxon>
        <taxon>Saccharomycetaceae</taxon>
        <taxon>Nakaseomyces</taxon>
    </lineage>
</organism>
<feature type="chain" id="PRO_0000278857" description="Vacuolar fusion protein MON1">
    <location>
        <begin position="1"/>
        <end position="597"/>
    </location>
</feature>
<feature type="region of interest" description="Disordered" evidence="3">
    <location>
        <begin position="33"/>
        <end position="62"/>
    </location>
</feature>
<feature type="compositionally biased region" description="Polar residues" evidence="3">
    <location>
        <begin position="33"/>
        <end position="44"/>
    </location>
</feature>
<feature type="compositionally biased region" description="Basic and acidic residues" evidence="3">
    <location>
        <begin position="48"/>
        <end position="62"/>
    </location>
</feature>
<evidence type="ECO:0000250" key="1"/>
<evidence type="ECO:0000250" key="2">
    <source>
        <dbReference type="UniProtKB" id="P53129"/>
    </source>
</evidence>
<evidence type="ECO:0000256" key="3">
    <source>
        <dbReference type="SAM" id="MobiDB-lite"/>
    </source>
</evidence>
<evidence type="ECO:0000305" key="4"/>
<accession>Q6FU19</accession>
<comment type="function">
    <text evidence="2">In complex with CCZ1, is required for multiple vacuole delivery pathways including the cytoplasm to vacuole transport (Cvt), autophagy, pexophagy and endocytosis. The MON1-CCZ1 complex acts at the fusion of vesicles with the vacuole, through its regulation of the SNARE complex during the coordinated priming and docking stages of fusion, and particularly at the stage of tethering/docking.</text>
</comment>
<comment type="subcellular location">
    <subcellularLocation>
        <location evidence="1">Endosome</location>
        <location evidence="1">Multivesicular body membrane</location>
        <topology evidence="1">Peripheral membrane protein</topology>
    </subcellularLocation>
    <subcellularLocation>
        <location evidence="1">Prevacuolar compartment membrane</location>
        <topology evidence="1">Peripheral membrane protein</topology>
    </subcellularLocation>
    <subcellularLocation>
        <location evidence="1">Vacuole membrane</location>
        <topology evidence="1">Peripheral membrane protein</topology>
    </subcellularLocation>
</comment>
<comment type="similarity">
    <text evidence="4">Belongs to the MON1/SAND family.</text>
</comment>
<protein>
    <recommendedName>
        <fullName>Vacuolar fusion protein MON1</fullName>
    </recommendedName>
</protein>
<name>MON1_CANGA</name>
<reference key="1">
    <citation type="journal article" date="2004" name="Nature">
        <title>Genome evolution in yeasts.</title>
        <authorList>
            <person name="Dujon B."/>
            <person name="Sherman D."/>
            <person name="Fischer G."/>
            <person name="Durrens P."/>
            <person name="Casaregola S."/>
            <person name="Lafontaine I."/>
            <person name="de Montigny J."/>
            <person name="Marck C."/>
            <person name="Neuveglise C."/>
            <person name="Talla E."/>
            <person name="Goffard N."/>
            <person name="Frangeul L."/>
            <person name="Aigle M."/>
            <person name="Anthouard V."/>
            <person name="Babour A."/>
            <person name="Barbe V."/>
            <person name="Barnay S."/>
            <person name="Blanchin S."/>
            <person name="Beckerich J.-M."/>
            <person name="Beyne E."/>
            <person name="Bleykasten C."/>
            <person name="Boisrame A."/>
            <person name="Boyer J."/>
            <person name="Cattolico L."/>
            <person name="Confanioleri F."/>
            <person name="de Daruvar A."/>
            <person name="Despons L."/>
            <person name="Fabre E."/>
            <person name="Fairhead C."/>
            <person name="Ferry-Dumazet H."/>
            <person name="Groppi A."/>
            <person name="Hantraye F."/>
            <person name="Hennequin C."/>
            <person name="Jauniaux N."/>
            <person name="Joyet P."/>
            <person name="Kachouri R."/>
            <person name="Kerrest A."/>
            <person name="Koszul R."/>
            <person name="Lemaire M."/>
            <person name="Lesur I."/>
            <person name="Ma L."/>
            <person name="Muller H."/>
            <person name="Nicaud J.-M."/>
            <person name="Nikolski M."/>
            <person name="Oztas S."/>
            <person name="Ozier-Kalogeropoulos O."/>
            <person name="Pellenz S."/>
            <person name="Potier S."/>
            <person name="Richard G.-F."/>
            <person name="Straub M.-L."/>
            <person name="Suleau A."/>
            <person name="Swennen D."/>
            <person name="Tekaia F."/>
            <person name="Wesolowski-Louvel M."/>
            <person name="Westhof E."/>
            <person name="Wirth B."/>
            <person name="Zeniou-Meyer M."/>
            <person name="Zivanovic Y."/>
            <person name="Bolotin-Fukuhara M."/>
            <person name="Thierry A."/>
            <person name="Bouchier C."/>
            <person name="Caudron B."/>
            <person name="Scarpelli C."/>
            <person name="Gaillardin C."/>
            <person name="Weissenbach J."/>
            <person name="Wincker P."/>
            <person name="Souciet J.-L."/>
        </authorList>
    </citation>
    <scope>NUCLEOTIDE SEQUENCE [LARGE SCALE GENOMIC DNA]</scope>
    <source>
        <strain>ATCC 2001 / BCRC 20586 / JCM 3761 / NBRC 0622 / NRRL Y-65 / CBS 138</strain>
    </source>
</reference>
<dbReference type="EMBL" id="CR380952">
    <property type="protein sequence ID" value="CAG59199.1"/>
    <property type="molecule type" value="Genomic_DNA"/>
</dbReference>
<dbReference type="RefSeq" id="XP_446275.1">
    <property type="nucleotide sequence ID" value="XM_446275.1"/>
</dbReference>
<dbReference type="SMR" id="Q6FU19"/>
<dbReference type="FunCoup" id="Q6FU19">
    <property type="interactions" value="585"/>
</dbReference>
<dbReference type="STRING" id="284593.Q6FU19"/>
<dbReference type="EnsemblFungi" id="CAGL0F07051g-T">
    <property type="protein sequence ID" value="CAGL0F07051g-T-p1"/>
    <property type="gene ID" value="CAGL0F07051g"/>
</dbReference>
<dbReference type="KEGG" id="cgr:2887661"/>
<dbReference type="CGD" id="CAL0129189">
    <property type="gene designation" value="CAGL0F07051g"/>
</dbReference>
<dbReference type="VEuPathDB" id="FungiDB:CAGL0F07051g"/>
<dbReference type="eggNOG" id="KOG0997">
    <property type="taxonomic scope" value="Eukaryota"/>
</dbReference>
<dbReference type="HOGENOM" id="CLU_014574_0_0_1"/>
<dbReference type="InParanoid" id="Q6FU19"/>
<dbReference type="OMA" id="YTHIRNN"/>
<dbReference type="Proteomes" id="UP000002428">
    <property type="component" value="Chromosome F"/>
</dbReference>
<dbReference type="GO" id="GO:0005829">
    <property type="term" value="C:cytosol"/>
    <property type="evidence" value="ECO:0007669"/>
    <property type="project" value="EnsemblFungi"/>
</dbReference>
<dbReference type="GO" id="GO:0000329">
    <property type="term" value="C:fungal-type vacuole membrane"/>
    <property type="evidence" value="ECO:0007669"/>
    <property type="project" value="EnsemblFungi"/>
</dbReference>
<dbReference type="GO" id="GO:0035658">
    <property type="term" value="C:Mon1-Ccz1 complex"/>
    <property type="evidence" value="ECO:0007669"/>
    <property type="project" value="EnsemblFungi"/>
</dbReference>
<dbReference type="GO" id="GO:0032585">
    <property type="term" value="C:multivesicular body membrane"/>
    <property type="evidence" value="ECO:0007669"/>
    <property type="project" value="UniProtKB-SubCell"/>
</dbReference>
<dbReference type="GO" id="GO:1990624">
    <property type="term" value="F:guanyl nucleotide exchange factor inhibitor activity"/>
    <property type="evidence" value="ECO:0007669"/>
    <property type="project" value="EnsemblFungi"/>
</dbReference>
<dbReference type="GO" id="GO:0005085">
    <property type="term" value="F:guanyl-nucleotide exchange factor activity"/>
    <property type="evidence" value="ECO:0007669"/>
    <property type="project" value="EnsemblFungi"/>
</dbReference>
<dbReference type="GO" id="GO:0032266">
    <property type="term" value="F:phosphatidylinositol-3-phosphate binding"/>
    <property type="evidence" value="ECO:0007669"/>
    <property type="project" value="EnsemblFungi"/>
</dbReference>
<dbReference type="GO" id="GO:0010314">
    <property type="term" value="F:phosphatidylinositol-5-phosphate binding"/>
    <property type="evidence" value="ECO:0007669"/>
    <property type="project" value="EnsemblFungi"/>
</dbReference>
<dbReference type="GO" id="GO:0001786">
    <property type="term" value="F:phosphatidylserine binding"/>
    <property type="evidence" value="ECO:0007669"/>
    <property type="project" value="EnsemblFungi"/>
</dbReference>
<dbReference type="GO" id="GO:0032258">
    <property type="term" value="P:cytoplasm to vacuole targeting by the Cvt pathway"/>
    <property type="evidence" value="ECO:0007669"/>
    <property type="project" value="EnsemblFungi"/>
</dbReference>
<dbReference type="GO" id="GO:0032511">
    <property type="term" value="P:late endosome to vacuole transport via multivesicular body sorting pathway"/>
    <property type="evidence" value="ECO:0007669"/>
    <property type="project" value="EnsemblFungi"/>
</dbReference>
<dbReference type="GO" id="GO:0016236">
    <property type="term" value="P:macroautophagy"/>
    <property type="evidence" value="ECO:0007669"/>
    <property type="project" value="EnsemblFungi"/>
</dbReference>
<dbReference type="GO" id="GO:0044395">
    <property type="term" value="P:protein targeting to vacuolar membrane"/>
    <property type="evidence" value="ECO:0007669"/>
    <property type="project" value="EnsemblFungi"/>
</dbReference>
<dbReference type="GO" id="GO:0048278">
    <property type="term" value="P:vesicle docking"/>
    <property type="evidence" value="ECO:0007669"/>
    <property type="project" value="EnsemblFungi"/>
</dbReference>
<dbReference type="InterPro" id="IPR043972">
    <property type="entry name" value="FUZ/MON1/HPS1_longin_1"/>
</dbReference>
<dbReference type="InterPro" id="IPR043971">
    <property type="entry name" value="FUZ/MON1/HPS1_longin_2"/>
</dbReference>
<dbReference type="InterPro" id="IPR043970">
    <property type="entry name" value="FUZ/MON1/HPS1_longin_3"/>
</dbReference>
<dbReference type="InterPro" id="IPR004353">
    <property type="entry name" value="Mon1"/>
</dbReference>
<dbReference type="PANTHER" id="PTHR13027">
    <property type="entry name" value="SAND PROTEIN-RELATED"/>
    <property type="match status" value="1"/>
</dbReference>
<dbReference type="PANTHER" id="PTHR13027:SF7">
    <property type="entry name" value="VACUOLAR FUSION PROTEIN MON1 HOMOLOG"/>
    <property type="match status" value="1"/>
</dbReference>
<dbReference type="Pfam" id="PF19036">
    <property type="entry name" value="Fuz_longin_1"/>
    <property type="match status" value="1"/>
</dbReference>
<dbReference type="Pfam" id="PF19037">
    <property type="entry name" value="Fuz_longin_2"/>
    <property type="match status" value="1"/>
</dbReference>
<dbReference type="Pfam" id="PF19038">
    <property type="entry name" value="Fuz_longin_3"/>
    <property type="match status" value="1"/>
</dbReference>
<dbReference type="PRINTS" id="PR01546">
    <property type="entry name" value="YEAST73DUF"/>
</dbReference>
<gene>
    <name type="primary">MON1</name>
    <name type="ordered locus">CAGL0F07051g</name>
</gene>
<keyword id="KW-0072">Autophagy</keyword>
<keyword id="KW-0967">Endosome</keyword>
<keyword id="KW-0472">Membrane</keyword>
<keyword id="KW-0653">Protein transport</keyword>
<keyword id="KW-1185">Reference proteome</keyword>
<keyword id="KW-0813">Transport</keyword>
<keyword id="KW-0926">Vacuole</keyword>
<sequence length="597" mass="68276">MLSRKSSNWLLNVPSQSEATTSVNLQSTEVGSITHTSSDDNIATPQDGIDHIDNDRSSSRAENIDMTASMVSHSRSLASLRPVMSSNFQNESDHIDDSLEFDLMRSLNESIYSTDGAISKPFMINEMPQIFDKNSNEDITKNFFIFTSAGKPVYSMYENDKFSASYIGLLTSIISFFQTSNEDNIKTFTSKESNITFVFCNKDPIFYVAMSRCRDESRDELEAQLHFLHSFVLSTLTSKQLTKLFQKRDNFDLRSHLESTDFETLSEICSNFTDKLYPEFSLNSLQCLKLKKPIRAKIHSIMSSQLNKMEDFPRGTLLYSFIIASNNRLCNVLRPKSHTLHPVDLQILFLVIATQFHNLESDKELWIPICFPKFNSNGYLYCYIRTIMNPGDKSSSKFLGHPPVLVAISGQKDAFFKMKSYCDELMVILTRNNEIIRELRTSILQPYSITDIPAPLVHHFIFKSSKHIQFTMPQLSTSASEPEQRALYERKLKFYYKSLQNSIAQEIASQSNKSLVNFVQWSEPAKSNSEETTDHDSFIEEPVNMLGMVWCSPRFELLLLFNNGIVTRKQALSSARRIVRWCVSNESSLFINEGATF</sequence>
<proteinExistence type="inferred from homology"/>